<comment type="function">
    <text evidence="1">Catalyzes the methyl esterification of L-isoaspartyl residues in peptides and proteins that result from spontaneous decomposition of normal L-aspartyl and L-asparaginyl residues. It plays a role in the repair and/or degradation of damaged proteins.</text>
</comment>
<comment type="catalytic activity">
    <reaction evidence="1">
        <text>[protein]-L-isoaspartate + S-adenosyl-L-methionine = [protein]-L-isoaspartate alpha-methyl ester + S-adenosyl-L-homocysteine</text>
        <dbReference type="Rhea" id="RHEA:12705"/>
        <dbReference type="Rhea" id="RHEA-COMP:12143"/>
        <dbReference type="Rhea" id="RHEA-COMP:12144"/>
        <dbReference type="ChEBI" id="CHEBI:57856"/>
        <dbReference type="ChEBI" id="CHEBI:59789"/>
        <dbReference type="ChEBI" id="CHEBI:90596"/>
        <dbReference type="ChEBI" id="CHEBI:90598"/>
        <dbReference type="EC" id="2.1.1.77"/>
    </reaction>
</comment>
<comment type="subcellular location">
    <subcellularLocation>
        <location evidence="1">Cytoplasm</location>
    </subcellularLocation>
</comment>
<comment type="similarity">
    <text evidence="1">Belongs to the methyltransferase superfamily. L-isoaspartyl/D-aspartyl protein methyltransferase family.</text>
</comment>
<comment type="sequence caution" evidence="2">
    <conflict type="erroneous initiation">
        <sequence resource="EMBL-CDS" id="ABO23081"/>
    </conflict>
</comment>
<reference key="1">
    <citation type="submission" date="2007-03" db="EMBL/GenBank/DDBJ databases">
        <title>Complete sequence of Shewanella loihica PV-4.</title>
        <authorList>
            <consortium name="US DOE Joint Genome Institute"/>
            <person name="Copeland A."/>
            <person name="Lucas S."/>
            <person name="Lapidus A."/>
            <person name="Barry K."/>
            <person name="Detter J.C."/>
            <person name="Glavina del Rio T."/>
            <person name="Hammon N."/>
            <person name="Israni S."/>
            <person name="Dalin E."/>
            <person name="Tice H."/>
            <person name="Pitluck S."/>
            <person name="Chain P."/>
            <person name="Malfatti S."/>
            <person name="Shin M."/>
            <person name="Vergez L."/>
            <person name="Schmutz J."/>
            <person name="Larimer F."/>
            <person name="Land M."/>
            <person name="Hauser L."/>
            <person name="Kyrpides N."/>
            <person name="Mikhailova N."/>
            <person name="Romine M.F."/>
            <person name="Serres G."/>
            <person name="Fredrickson J."/>
            <person name="Tiedje J."/>
            <person name="Richardson P."/>
        </authorList>
    </citation>
    <scope>NUCLEOTIDE SEQUENCE [LARGE SCALE GENOMIC DNA]</scope>
    <source>
        <strain>ATCC BAA-1088 / PV-4</strain>
    </source>
</reference>
<feature type="chain" id="PRO_0000351935" description="Protein-L-isoaspartate O-methyltransferase">
    <location>
        <begin position="1"/>
        <end position="211"/>
    </location>
</feature>
<feature type="active site" evidence="1">
    <location>
        <position position="62"/>
    </location>
</feature>
<name>PIMT_SHELP</name>
<gene>
    <name evidence="1" type="primary">pcm</name>
    <name type="ordered locus">Shew_1211</name>
</gene>
<proteinExistence type="inferred from homology"/>
<dbReference type="EC" id="2.1.1.77" evidence="1"/>
<dbReference type="EMBL" id="CP000606">
    <property type="protein sequence ID" value="ABO23081.1"/>
    <property type="status" value="ALT_INIT"/>
    <property type="molecule type" value="Genomic_DNA"/>
</dbReference>
<dbReference type="RefSeq" id="WP_041406509.1">
    <property type="nucleotide sequence ID" value="NC_009092.1"/>
</dbReference>
<dbReference type="SMR" id="A3QC83"/>
<dbReference type="STRING" id="323850.Shew_1211"/>
<dbReference type="KEGG" id="slo:Shew_1211"/>
<dbReference type="eggNOG" id="COG2518">
    <property type="taxonomic scope" value="Bacteria"/>
</dbReference>
<dbReference type="HOGENOM" id="CLU_055432_2_0_6"/>
<dbReference type="OrthoDB" id="9810066at2"/>
<dbReference type="Proteomes" id="UP000001558">
    <property type="component" value="Chromosome"/>
</dbReference>
<dbReference type="GO" id="GO:0005737">
    <property type="term" value="C:cytoplasm"/>
    <property type="evidence" value="ECO:0007669"/>
    <property type="project" value="UniProtKB-SubCell"/>
</dbReference>
<dbReference type="GO" id="GO:0004719">
    <property type="term" value="F:protein-L-isoaspartate (D-aspartate) O-methyltransferase activity"/>
    <property type="evidence" value="ECO:0007669"/>
    <property type="project" value="UniProtKB-UniRule"/>
</dbReference>
<dbReference type="GO" id="GO:0032259">
    <property type="term" value="P:methylation"/>
    <property type="evidence" value="ECO:0007669"/>
    <property type="project" value="UniProtKB-KW"/>
</dbReference>
<dbReference type="GO" id="GO:0036211">
    <property type="term" value="P:protein modification process"/>
    <property type="evidence" value="ECO:0007669"/>
    <property type="project" value="UniProtKB-UniRule"/>
</dbReference>
<dbReference type="GO" id="GO:0030091">
    <property type="term" value="P:protein repair"/>
    <property type="evidence" value="ECO:0007669"/>
    <property type="project" value="UniProtKB-UniRule"/>
</dbReference>
<dbReference type="CDD" id="cd02440">
    <property type="entry name" value="AdoMet_MTases"/>
    <property type="match status" value="1"/>
</dbReference>
<dbReference type="FunFam" id="3.40.50.150:FF:000010">
    <property type="entry name" value="Protein-L-isoaspartate O-methyltransferase"/>
    <property type="match status" value="1"/>
</dbReference>
<dbReference type="Gene3D" id="3.40.50.150">
    <property type="entry name" value="Vaccinia Virus protein VP39"/>
    <property type="match status" value="1"/>
</dbReference>
<dbReference type="HAMAP" id="MF_00090">
    <property type="entry name" value="PIMT"/>
    <property type="match status" value="1"/>
</dbReference>
<dbReference type="InterPro" id="IPR000682">
    <property type="entry name" value="PCMT"/>
</dbReference>
<dbReference type="InterPro" id="IPR029063">
    <property type="entry name" value="SAM-dependent_MTases_sf"/>
</dbReference>
<dbReference type="NCBIfam" id="TIGR00080">
    <property type="entry name" value="pimt"/>
    <property type="match status" value="1"/>
</dbReference>
<dbReference type="NCBIfam" id="NF001453">
    <property type="entry name" value="PRK00312.1"/>
    <property type="match status" value="1"/>
</dbReference>
<dbReference type="PANTHER" id="PTHR11579">
    <property type="entry name" value="PROTEIN-L-ISOASPARTATE O-METHYLTRANSFERASE"/>
    <property type="match status" value="1"/>
</dbReference>
<dbReference type="PANTHER" id="PTHR11579:SF0">
    <property type="entry name" value="PROTEIN-L-ISOASPARTATE(D-ASPARTATE) O-METHYLTRANSFERASE"/>
    <property type="match status" value="1"/>
</dbReference>
<dbReference type="Pfam" id="PF01135">
    <property type="entry name" value="PCMT"/>
    <property type="match status" value="1"/>
</dbReference>
<dbReference type="SUPFAM" id="SSF53335">
    <property type="entry name" value="S-adenosyl-L-methionine-dependent methyltransferases"/>
    <property type="match status" value="1"/>
</dbReference>
<dbReference type="PROSITE" id="PS01279">
    <property type="entry name" value="PCMT"/>
    <property type="match status" value="1"/>
</dbReference>
<evidence type="ECO:0000255" key="1">
    <source>
        <dbReference type="HAMAP-Rule" id="MF_00090"/>
    </source>
</evidence>
<evidence type="ECO:0000305" key="2"/>
<keyword id="KW-0963">Cytoplasm</keyword>
<keyword id="KW-0489">Methyltransferase</keyword>
<keyword id="KW-1185">Reference proteome</keyword>
<keyword id="KW-0949">S-adenosyl-L-methionine</keyword>
<keyword id="KW-0808">Transferase</keyword>
<protein>
    <recommendedName>
        <fullName evidence="1">Protein-L-isoaspartate O-methyltransferase</fullName>
        <ecNumber evidence="1">2.1.1.77</ecNumber>
    </recommendedName>
    <alternativeName>
        <fullName evidence="1">L-isoaspartyl protein carboxyl methyltransferase</fullName>
    </alternativeName>
    <alternativeName>
        <fullName evidence="1">Protein L-isoaspartyl methyltransferase</fullName>
    </alternativeName>
    <alternativeName>
        <fullName evidence="1">Protein-beta-aspartate methyltransferase</fullName>
        <shortName evidence="1">PIMT</shortName>
    </alternativeName>
</protein>
<accession>A3QC83</accession>
<organism>
    <name type="scientific">Shewanella loihica (strain ATCC BAA-1088 / PV-4)</name>
    <dbReference type="NCBI Taxonomy" id="323850"/>
    <lineage>
        <taxon>Bacteria</taxon>
        <taxon>Pseudomonadati</taxon>
        <taxon>Pseudomonadota</taxon>
        <taxon>Gammaproteobacteria</taxon>
        <taxon>Alteromonadales</taxon>
        <taxon>Shewanellaceae</taxon>
        <taxon>Shewanella</taxon>
    </lineage>
</organism>
<sequence length="211" mass="22854">MNGVATTAALNLARHLQGAGITNAEVLAVVAKTPRELFLDAALGHKAYENTALPIGQGQTISQPYIVARMTELLLESRPKRVLEIGTGSGYQAAILAQLVDELCTVERIKSLQIQARQRLKRLDLHNVSFKYGDGWQGWANKGPFDAIMVTAAASSVPQALLQQLADGGVLVIPVGEETQQLMRVVRMGDQFHSQTIEMVKFVPLVNGELA</sequence>